<dbReference type="EC" id="6.1.1.3" evidence="1"/>
<dbReference type="EMBL" id="CP000539">
    <property type="protein sequence ID" value="ABM42561.1"/>
    <property type="molecule type" value="Genomic_DNA"/>
</dbReference>
<dbReference type="SMR" id="A1W8I6"/>
<dbReference type="STRING" id="232721.Ajs_2400"/>
<dbReference type="KEGG" id="ajs:Ajs_2400"/>
<dbReference type="eggNOG" id="COG0441">
    <property type="taxonomic scope" value="Bacteria"/>
</dbReference>
<dbReference type="HOGENOM" id="CLU_008554_0_1_4"/>
<dbReference type="Proteomes" id="UP000000645">
    <property type="component" value="Chromosome"/>
</dbReference>
<dbReference type="GO" id="GO:0005829">
    <property type="term" value="C:cytosol"/>
    <property type="evidence" value="ECO:0007669"/>
    <property type="project" value="TreeGrafter"/>
</dbReference>
<dbReference type="GO" id="GO:0005524">
    <property type="term" value="F:ATP binding"/>
    <property type="evidence" value="ECO:0007669"/>
    <property type="project" value="UniProtKB-UniRule"/>
</dbReference>
<dbReference type="GO" id="GO:0046872">
    <property type="term" value="F:metal ion binding"/>
    <property type="evidence" value="ECO:0007669"/>
    <property type="project" value="UniProtKB-KW"/>
</dbReference>
<dbReference type="GO" id="GO:0004829">
    <property type="term" value="F:threonine-tRNA ligase activity"/>
    <property type="evidence" value="ECO:0007669"/>
    <property type="project" value="UniProtKB-UniRule"/>
</dbReference>
<dbReference type="GO" id="GO:0000049">
    <property type="term" value="F:tRNA binding"/>
    <property type="evidence" value="ECO:0007669"/>
    <property type="project" value="UniProtKB-KW"/>
</dbReference>
<dbReference type="GO" id="GO:0006435">
    <property type="term" value="P:threonyl-tRNA aminoacylation"/>
    <property type="evidence" value="ECO:0007669"/>
    <property type="project" value="UniProtKB-UniRule"/>
</dbReference>
<dbReference type="CDD" id="cd01667">
    <property type="entry name" value="TGS_ThrRS"/>
    <property type="match status" value="1"/>
</dbReference>
<dbReference type="CDD" id="cd00860">
    <property type="entry name" value="ThrRS_anticodon"/>
    <property type="match status" value="1"/>
</dbReference>
<dbReference type="CDD" id="cd00771">
    <property type="entry name" value="ThrRS_core"/>
    <property type="match status" value="1"/>
</dbReference>
<dbReference type="FunFam" id="3.10.20.30:FF:000005">
    <property type="entry name" value="Threonine--tRNA ligase"/>
    <property type="match status" value="1"/>
</dbReference>
<dbReference type="FunFam" id="3.30.54.20:FF:000002">
    <property type="entry name" value="Threonine--tRNA ligase"/>
    <property type="match status" value="1"/>
</dbReference>
<dbReference type="FunFam" id="3.30.930.10:FF:000002">
    <property type="entry name" value="Threonine--tRNA ligase"/>
    <property type="match status" value="1"/>
</dbReference>
<dbReference type="FunFam" id="3.40.50.800:FF:000001">
    <property type="entry name" value="Threonine--tRNA ligase"/>
    <property type="match status" value="1"/>
</dbReference>
<dbReference type="FunFam" id="3.30.980.10:FF:000005">
    <property type="entry name" value="Threonyl-tRNA synthetase, mitochondrial"/>
    <property type="match status" value="1"/>
</dbReference>
<dbReference type="Gene3D" id="3.10.20.30">
    <property type="match status" value="1"/>
</dbReference>
<dbReference type="Gene3D" id="3.30.54.20">
    <property type="match status" value="1"/>
</dbReference>
<dbReference type="Gene3D" id="3.40.50.800">
    <property type="entry name" value="Anticodon-binding domain"/>
    <property type="match status" value="1"/>
</dbReference>
<dbReference type="Gene3D" id="3.30.930.10">
    <property type="entry name" value="Bira Bifunctional Protein, Domain 2"/>
    <property type="match status" value="1"/>
</dbReference>
<dbReference type="Gene3D" id="3.30.980.10">
    <property type="entry name" value="Threonyl-trna Synthetase, Chain A, domain 2"/>
    <property type="match status" value="1"/>
</dbReference>
<dbReference type="HAMAP" id="MF_00184">
    <property type="entry name" value="Thr_tRNA_synth"/>
    <property type="match status" value="1"/>
</dbReference>
<dbReference type="InterPro" id="IPR002314">
    <property type="entry name" value="aa-tRNA-synt_IIb"/>
</dbReference>
<dbReference type="InterPro" id="IPR006195">
    <property type="entry name" value="aa-tRNA-synth_II"/>
</dbReference>
<dbReference type="InterPro" id="IPR045864">
    <property type="entry name" value="aa-tRNA-synth_II/BPL/LPL"/>
</dbReference>
<dbReference type="InterPro" id="IPR004154">
    <property type="entry name" value="Anticodon-bd"/>
</dbReference>
<dbReference type="InterPro" id="IPR036621">
    <property type="entry name" value="Anticodon-bd_dom_sf"/>
</dbReference>
<dbReference type="InterPro" id="IPR012675">
    <property type="entry name" value="Beta-grasp_dom_sf"/>
</dbReference>
<dbReference type="InterPro" id="IPR004095">
    <property type="entry name" value="TGS"/>
</dbReference>
<dbReference type="InterPro" id="IPR012676">
    <property type="entry name" value="TGS-like"/>
</dbReference>
<dbReference type="InterPro" id="IPR002320">
    <property type="entry name" value="Thr-tRNA-ligase_IIa"/>
</dbReference>
<dbReference type="InterPro" id="IPR018163">
    <property type="entry name" value="Thr/Ala-tRNA-synth_IIc_edit"/>
</dbReference>
<dbReference type="InterPro" id="IPR047246">
    <property type="entry name" value="ThrRS_anticodon"/>
</dbReference>
<dbReference type="InterPro" id="IPR033728">
    <property type="entry name" value="ThrRS_core"/>
</dbReference>
<dbReference type="InterPro" id="IPR012947">
    <property type="entry name" value="tRNA_SAD"/>
</dbReference>
<dbReference type="NCBIfam" id="TIGR00418">
    <property type="entry name" value="thrS"/>
    <property type="match status" value="1"/>
</dbReference>
<dbReference type="PANTHER" id="PTHR11451:SF44">
    <property type="entry name" value="THREONINE--TRNA LIGASE, CHLOROPLASTIC_MITOCHONDRIAL 2"/>
    <property type="match status" value="1"/>
</dbReference>
<dbReference type="PANTHER" id="PTHR11451">
    <property type="entry name" value="THREONINE-TRNA LIGASE"/>
    <property type="match status" value="1"/>
</dbReference>
<dbReference type="Pfam" id="PF03129">
    <property type="entry name" value="HGTP_anticodon"/>
    <property type="match status" value="1"/>
</dbReference>
<dbReference type="Pfam" id="PF02824">
    <property type="entry name" value="TGS"/>
    <property type="match status" value="1"/>
</dbReference>
<dbReference type="Pfam" id="PF00587">
    <property type="entry name" value="tRNA-synt_2b"/>
    <property type="match status" value="1"/>
</dbReference>
<dbReference type="Pfam" id="PF07973">
    <property type="entry name" value="tRNA_SAD"/>
    <property type="match status" value="1"/>
</dbReference>
<dbReference type="PRINTS" id="PR01047">
    <property type="entry name" value="TRNASYNTHTHR"/>
</dbReference>
<dbReference type="SMART" id="SM00863">
    <property type="entry name" value="tRNA_SAD"/>
    <property type="match status" value="1"/>
</dbReference>
<dbReference type="SUPFAM" id="SSF52954">
    <property type="entry name" value="Class II aaRS ABD-related"/>
    <property type="match status" value="1"/>
</dbReference>
<dbReference type="SUPFAM" id="SSF55681">
    <property type="entry name" value="Class II aaRS and biotin synthetases"/>
    <property type="match status" value="1"/>
</dbReference>
<dbReference type="SUPFAM" id="SSF81271">
    <property type="entry name" value="TGS-like"/>
    <property type="match status" value="1"/>
</dbReference>
<dbReference type="SUPFAM" id="SSF55186">
    <property type="entry name" value="ThrRS/AlaRS common domain"/>
    <property type="match status" value="1"/>
</dbReference>
<dbReference type="PROSITE" id="PS50862">
    <property type="entry name" value="AA_TRNA_LIGASE_II"/>
    <property type="match status" value="1"/>
</dbReference>
<dbReference type="PROSITE" id="PS51880">
    <property type="entry name" value="TGS"/>
    <property type="match status" value="1"/>
</dbReference>
<organism>
    <name type="scientific">Acidovorax sp. (strain JS42)</name>
    <dbReference type="NCBI Taxonomy" id="232721"/>
    <lineage>
        <taxon>Bacteria</taxon>
        <taxon>Pseudomonadati</taxon>
        <taxon>Pseudomonadota</taxon>
        <taxon>Betaproteobacteria</taxon>
        <taxon>Burkholderiales</taxon>
        <taxon>Comamonadaceae</taxon>
        <taxon>Acidovorax</taxon>
    </lineage>
</organism>
<accession>A1W8I6</accession>
<gene>
    <name evidence="1" type="primary">thrS</name>
    <name type="ordered locus">Ajs_2400</name>
</gene>
<sequence length="639" mass="72156">MIHITLPDGSQREFAGPVTVAEVAASIGSGLAKAALAGKIGDKVVDTSYQITQDSPLSIVTAKDADGLEVIRHSTAHLLAYAVKELFPDAQVTIGPVIENGFYYDFSYKRPFTPEDLAAIEKRMAELAAKDEPVVRRVLPRDEAVAYFKGLGEHYKAEIIASIPTNEDVSLYREGGFEDLCRGPHVPSTGKLKFFKLMKVAGAYWRGDHRNEMLQRIYGTAWATKEELQEYLHMLEEAEKRDHRKLGRELDLFHIDEHSPGTVFWHPKGWTLWQEVEQYMRRVYRDNGYQEVKGPQILDKTLWEKTGHWDKYRDNMFTTESEKRDYALKPMNCPGHILIFKQGIKSYRDLPLRYGEFGQCHRNEPTGGLHGIMRVRGFTQDDGHIFCTEDHILAECTAYTALLQKVYKDFGFHNIIYKVATRPEARIGSDESWDKAEHALMESLRASGCEFEIAPGDGAFYGPKIEYTLKDAIGRQWQCGTMQVDFSMPERLDAEYVGEDGGRHRPVMLHRAIVGSLERFIGILIEEHAGALPVWLAPVQVAVLNITDAQQDYCREIAAKLQKALPNQGLRVVTDLRNEKITYKIREHSLQKLPYILVAGDKEKAAGAVAVRARGNKDLGVMSLDAFVDLIAQDIASKV</sequence>
<evidence type="ECO:0000255" key="1">
    <source>
        <dbReference type="HAMAP-Rule" id="MF_00184"/>
    </source>
</evidence>
<evidence type="ECO:0000255" key="2">
    <source>
        <dbReference type="PROSITE-ProRule" id="PRU01228"/>
    </source>
</evidence>
<proteinExistence type="inferred from homology"/>
<protein>
    <recommendedName>
        <fullName evidence="1">Threonine--tRNA ligase</fullName>
        <ecNumber evidence="1">6.1.1.3</ecNumber>
    </recommendedName>
    <alternativeName>
        <fullName evidence="1">Threonyl-tRNA synthetase</fullName>
        <shortName evidence="1">ThrRS</shortName>
    </alternativeName>
</protein>
<keyword id="KW-0030">Aminoacyl-tRNA synthetase</keyword>
<keyword id="KW-0067">ATP-binding</keyword>
<keyword id="KW-0963">Cytoplasm</keyword>
<keyword id="KW-0436">Ligase</keyword>
<keyword id="KW-0479">Metal-binding</keyword>
<keyword id="KW-0547">Nucleotide-binding</keyword>
<keyword id="KW-0648">Protein biosynthesis</keyword>
<keyword id="KW-0694">RNA-binding</keyword>
<keyword id="KW-0820">tRNA-binding</keyword>
<keyword id="KW-0862">Zinc</keyword>
<feature type="chain" id="PRO_1000020331" description="Threonine--tRNA ligase">
    <location>
        <begin position="1"/>
        <end position="639"/>
    </location>
</feature>
<feature type="domain" description="TGS" evidence="2">
    <location>
        <begin position="1"/>
        <end position="61"/>
    </location>
</feature>
<feature type="region of interest" description="Catalytic" evidence="1">
    <location>
        <begin position="242"/>
        <end position="533"/>
    </location>
</feature>
<feature type="binding site" evidence="1">
    <location>
        <position position="333"/>
    </location>
    <ligand>
        <name>Zn(2+)</name>
        <dbReference type="ChEBI" id="CHEBI:29105"/>
    </ligand>
</feature>
<feature type="binding site" evidence="1">
    <location>
        <position position="384"/>
    </location>
    <ligand>
        <name>Zn(2+)</name>
        <dbReference type="ChEBI" id="CHEBI:29105"/>
    </ligand>
</feature>
<feature type="binding site" evidence="1">
    <location>
        <position position="510"/>
    </location>
    <ligand>
        <name>Zn(2+)</name>
        <dbReference type="ChEBI" id="CHEBI:29105"/>
    </ligand>
</feature>
<comment type="function">
    <text evidence="1">Catalyzes the attachment of threonine to tRNA(Thr) in a two-step reaction: L-threonine is first activated by ATP to form Thr-AMP and then transferred to the acceptor end of tRNA(Thr). Also edits incorrectly charged L-seryl-tRNA(Thr).</text>
</comment>
<comment type="catalytic activity">
    <reaction evidence="1">
        <text>tRNA(Thr) + L-threonine + ATP = L-threonyl-tRNA(Thr) + AMP + diphosphate + H(+)</text>
        <dbReference type="Rhea" id="RHEA:24624"/>
        <dbReference type="Rhea" id="RHEA-COMP:9670"/>
        <dbReference type="Rhea" id="RHEA-COMP:9704"/>
        <dbReference type="ChEBI" id="CHEBI:15378"/>
        <dbReference type="ChEBI" id="CHEBI:30616"/>
        <dbReference type="ChEBI" id="CHEBI:33019"/>
        <dbReference type="ChEBI" id="CHEBI:57926"/>
        <dbReference type="ChEBI" id="CHEBI:78442"/>
        <dbReference type="ChEBI" id="CHEBI:78534"/>
        <dbReference type="ChEBI" id="CHEBI:456215"/>
        <dbReference type="EC" id="6.1.1.3"/>
    </reaction>
</comment>
<comment type="cofactor">
    <cofactor evidence="1">
        <name>Zn(2+)</name>
        <dbReference type="ChEBI" id="CHEBI:29105"/>
    </cofactor>
    <text evidence="1">Binds 1 zinc ion per subunit.</text>
</comment>
<comment type="subunit">
    <text evidence="1">Homodimer.</text>
</comment>
<comment type="subcellular location">
    <subcellularLocation>
        <location evidence="1">Cytoplasm</location>
    </subcellularLocation>
</comment>
<comment type="similarity">
    <text evidence="1">Belongs to the class-II aminoacyl-tRNA synthetase family.</text>
</comment>
<reference key="1">
    <citation type="submission" date="2006-12" db="EMBL/GenBank/DDBJ databases">
        <title>Complete sequence of chromosome 1 of Acidovorax sp. JS42.</title>
        <authorList>
            <person name="Copeland A."/>
            <person name="Lucas S."/>
            <person name="Lapidus A."/>
            <person name="Barry K."/>
            <person name="Detter J.C."/>
            <person name="Glavina del Rio T."/>
            <person name="Dalin E."/>
            <person name="Tice H."/>
            <person name="Pitluck S."/>
            <person name="Chertkov O."/>
            <person name="Brettin T."/>
            <person name="Bruce D."/>
            <person name="Han C."/>
            <person name="Tapia R."/>
            <person name="Gilna P."/>
            <person name="Schmutz J."/>
            <person name="Larimer F."/>
            <person name="Land M."/>
            <person name="Hauser L."/>
            <person name="Kyrpides N."/>
            <person name="Kim E."/>
            <person name="Stahl D."/>
            <person name="Richardson P."/>
        </authorList>
    </citation>
    <scope>NUCLEOTIDE SEQUENCE [LARGE SCALE GENOMIC DNA]</scope>
    <source>
        <strain>JS42</strain>
    </source>
</reference>
<name>SYT_ACISJ</name>